<comment type="similarity">
    <text evidence="1">Belongs to the UPF0434 family.</text>
</comment>
<protein>
    <recommendedName>
        <fullName evidence="1">UPF0434 protein NMC0623</fullName>
    </recommendedName>
</protein>
<name>Y623_NEIMF</name>
<feature type="chain" id="PRO_0000291118" description="UPF0434 protein NMC0623">
    <location>
        <begin position="1"/>
        <end position="60"/>
    </location>
</feature>
<proteinExistence type="inferred from homology"/>
<organism>
    <name type="scientific">Neisseria meningitidis serogroup C / serotype 2a (strain ATCC 700532 / DSM 15464 / FAM18)</name>
    <dbReference type="NCBI Taxonomy" id="272831"/>
    <lineage>
        <taxon>Bacteria</taxon>
        <taxon>Pseudomonadati</taxon>
        <taxon>Pseudomonadota</taxon>
        <taxon>Betaproteobacteria</taxon>
        <taxon>Neisseriales</taxon>
        <taxon>Neisseriaceae</taxon>
        <taxon>Neisseria</taxon>
    </lineage>
</organism>
<sequence>MEKKFLDILVCPVTKGRLEYHQDKQELWSRQAKLAYPIKDGIPYMLENEARPLGEEELEA</sequence>
<evidence type="ECO:0000255" key="1">
    <source>
        <dbReference type="HAMAP-Rule" id="MF_01187"/>
    </source>
</evidence>
<dbReference type="EMBL" id="AM421808">
    <property type="protein sequence ID" value="CAM09916.1"/>
    <property type="molecule type" value="Genomic_DNA"/>
</dbReference>
<dbReference type="RefSeq" id="WP_002214187.1">
    <property type="nucleotide sequence ID" value="NC_008767.1"/>
</dbReference>
<dbReference type="SMR" id="A1KST5"/>
<dbReference type="KEGG" id="nmc:NMC0623"/>
<dbReference type="HOGENOM" id="CLU_155659_2_2_4"/>
<dbReference type="Proteomes" id="UP000002286">
    <property type="component" value="Chromosome"/>
</dbReference>
<dbReference type="GO" id="GO:0005829">
    <property type="term" value="C:cytosol"/>
    <property type="evidence" value="ECO:0007669"/>
    <property type="project" value="TreeGrafter"/>
</dbReference>
<dbReference type="FunFam" id="2.20.25.10:FF:000002">
    <property type="entry name" value="UPF0434 protein YcaR"/>
    <property type="match status" value="1"/>
</dbReference>
<dbReference type="Gene3D" id="2.20.25.10">
    <property type="match status" value="1"/>
</dbReference>
<dbReference type="HAMAP" id="MF_01187">
    <property type="entry name" value="UPF0434"/>
    <property type="match status" value="1"/>
</dbReference>
<dbReference type="InterPro" id="IPR005651">
    <property type="entry name" value="Trm112-like"/>
</dbReference>
<dbReference type="PANTHER" id="PTHR33505:SF4">
    <property type="entry name" value="PROTEIN PREY, MITOCHONDRIAL"/>
    <property type="match status" value="1"/>
</dbReference>
<dbReference type="PANTHER" id="PTHR33505">
    <property type="entry name" value="ZGC:162634"/>
    <property type="match status" value="1"/>
</dbReference>
<dbReference type="Pfam" id="PF03966">
    <property type="entry name" value="Trm112p"/>
    <property type="match status" value="1"/>
</dbReference>
<dbReference type="SUPFAM" id="SSF158997">
    <property type="entry name" value="Trm112p-like"/>
    <property type="match status" value="1"/>
</dbReference>
<reference key="1">
    <citation type="journal article" date="2007" name="PLoS Genet.">
        <title>Meningococcal genetic variation mechanisms viewed through comparative analysis of serogroup C strain FAM18.</title>
        <authorList>
            <person name="Bentley S.D."/>
            <person name="Vernikos G.S."/>
            <person name="Snyder L.A.S."/>
            <person name="Churcher C."/>
            <person name="Arrowsmith C."/>
            <person name="Chillingworth T."/>
            <person name="Cronin A."/>
            <person name="Davis P.H."/>
            <person name="Holroyd N.E."/>
            <person name="Jagels K."/>
            <person name="Maddison M."/>
            <person name="Moule S."/>
            <person name="Rabbinowitsch E."/>
            <person name="Sharp S."/>
            <person name="Unwin L."/>
            <person name="Whitehead S."/>
            <person name="Quail M.A."/>
            <person name="Achtman M."/>
            <person name="Barrell B.G."/>
            <person name="Saunders N.J."/>
            <person name="Parkhill J."/>
        </authorList>
    </citation>
    <scope>NUCLEOTIDE SEQUENCE [LARGE SCALE GENOMIC DNA]</scope>
    <source>
        <strain>ATCC 700532 / DSM 15464 / FAM18</strain>
    </source>
</reference>
<accession>A1KST5</accession>
<gene>
    <name type="ordered locus">NMC0623</name>
</gene>